<accession>Q5Z0D8</accession>
<feature type="chain" id="PRO_0000175680" description="Holo-[acyl-carrier-protein] synthase">
    <location>
        <begin position="1"/>
        <end position="145"/>
    </location>
</feature>
<feature type="binding site" evidence="1">
    <location>
        <position position="9"/>
    </location>
    <ligand>
        <name>Mg(2+)</name>
        <dbReference type="ChEBI" id="CHEBI:18420"/>
    </ligand>
</feature>
<feature type="binding site" evidence="1">
    <location>
        <position position="59"/>
    </location>
    <ligand>
        <name>Mg(2+)</name>
        <dbReference type="ChEBI" id="CHEBI:18420"/>
    </ligand>
</feature>
<organism>
    <name type="scientific">Nocardia farcinica (strain IFM 10152)</name>
    <dbReference type="NCBI Taxonomy" id="247156"/>
    <lineage>
        <taxon>Bacteria</taxon>
        <taxon>Bacillati</taxon>
        <taxon>Actinomycetota</taxon>
        <taxon>Actinomycetes</taxon>
        <taxon>Mycobacteriales</taxon>
        <taxon>Nocardiaceae</taxon>
        <taxon>Nocardia</taxon>
    </lineage>
</organism>
<protein>
    <recommendedName>
        <fullName evidence="1">Holo-[acyl-carrier-protein] synthase</fullName>
        <shortName evidence="1">Holo-ACP synthase</shortName>
        <ecNumber evidence="1">2.7.8.7</ecNumber>
    </recommendedName>
    <alternativeName>
        <fullName evidence="1">4'-phosphopantetheinyl transferase AcpS</fullName>
    </alternativeName>
</protein>
<gene>
    <name evidence="1" type="primary">acpS</name>
    <name type="ordered locus">NFA_12580</name>
</gene>
<dbReference type="EC" id="2.7.8.7" evidence="1"/>
<dbReference type="EMBL" id="AP006618">
    <property type="protein sequence ID" value="BAD56103.1"/>
    <property type="molecule type" value="Genomic_DNA"/>
</dbReference>
<dbReference type="RefSeq" id="WP_011207788.1">
    <property type="nucleotide sequence ID" value="NC_006361.1"/>
</dbReference>
<dbReference type="SMR" id="Q5Z0D8"/>
<dbReference type="STRING" id="247156.NFA_12580"/>
<dbReference type="GeneID" id="61132077"/>
<dbReference type="KEGG" id="nfa:NFA_12580"/>
<dbReference type="eggNOG" id="COG0736">
    <property type="taxonomic scope" value="Bacteria"/>
</dbReference>
<dbReference type="HOGENOM" id="CLU_089696_2_0_11"/>
<dbReference type="OrthoDB" id="517356at2"/>
<dbReference type="Proteomes" id="UP000006820">
    <property type="component" value="Chromosome"/>
</dbReference>
<dbReference type="GO" id="GO:0005737">
    <property type="term" value="C:cytoplasm"/>
    <property type="evidence" value="ECO:0007669"/>
    <property type="project" value="UniProtKB-SubCell"/>
</dbReference>
<dbReference type="GO" id="GO:0008897">
    <property type="term" value="F:holo-[acyl-carrier-protein] synthase activity"/>
    <property type="evidence" value="ECO:0007669"/>
    <property type="project" value="UniProtKB-UniRule"/>
</dbReference>
<dbReference type="GO" id="GO:0000287">
    <property type="term" value="F:magnesium ion binding"/>
    <property type="evidence" value="ECO:0007669"/>
    <property type="project" value="UniProtKB-UniRule"/>
</dbReference>
<dbReference type="GO" id="GO:0006633">
    <property type="term" value="P:fatty acid biosynthetic process"/>
    <property type="evidence" value="ECO:0007669"/>
    <property type="project" value="UniProtKB-UniRule"/>
</dbReference>
<dbReference type="Gene3D" id="3.90.470.20">
    <property type="entry name" value="4'-phosphopantetheinyl transferase domain"/>
    <property type="match status" value="1"/>
</dbReference>
<dbReference type="HAMAP" id="MF_00101">
    <property type="entry name" value="AcpS"/>
    <property type="match status" value="1"/>
</dbReference>
<dbReference type="InterPro" id="IPR008278">
    <property type="entry name" value="4-PPantetheinyl_Trfase_dom"/>
</dbReference>
<dbReference type="InterPro" id="IPR037143">
    <property type="entry name" value="4-PPantetheinyl_Trfase_dom_sf"/>
</dbReference>
<dbReference type="InterPro" id="IPR002582">
    <property type="entry name" value="ACPS"/>
</dbReference>
<dbReference type="InterPro" id="IPR004568">
    <property type="entry name" value="Ppantetheine-prot_Trfase_dom"/>
</dbReference>
<dbReference type="NCBIfam" id="TIGR00556">
    <property type="entry name" value="pantethn_trn"/>
    <property type="match status" value="1"/>
</dbReference>
<dbReference type="NCBIfam" id="NF000831">
    <property type="entry name" value="PRK00070.3-1"/>
    <property type="match status" value="1"/>
</dbReference>
<dbReference type="Pfam" id="PF01648">
    <property type="entry name" value="ACPS"/>
    <property type="match status" value="1"/>
</dbReference>
<dbReference type="SUPFAM" id="SSF56214">
    <property type="entry name" value="4'-phosphopantetheinyl transferase"/>
    <property type="match status" value="1"/>
</dbReference>
<name>ACPS_NOCFA</name>
<reference key="1">
    <citation type="journal article" date="2004" name="Proc. Natl. Acad. Sci. U.S.A.">
        <title>The complete genomic sequence of Nocardia farcinica IFM 10152.</title>
        <authorList>
            <person name="Ishikawa J."/>
            <person name="Yamashita A."/>
            <person name="Mikami Y."/>
            <person name="Hoshino Y."/>
            <person name="Kurita H."/>
            <person name="Hotta K."/>
            <person name="Shiba T."/>
            <person name="Hattori M."/>
        </authorList>
    </citation>
    <scope>NUCLEOTIDE SEQUENCE [LARGE SCALE GENOMIC DNA]</scope>
    <source>
        <strain>IFM 10152</strain>
    </source>
</reference>
<comment type="function">
    <text evidence="1">Transfers the 4'-phosphopantetheine moiety from coenzyme A to a Ser of acyl-carrier-protein.</text>
</comment>
<comment type="catalytic activity">
    <reaction evidence="1">
        <text>apo-[ACP] + CoA = holo-[ACP] + adenosine 3',5'-bisphosphate + H(+)</text>
        <dbReference type="Rhea" id="RHEA:12068"/>
        <dbReference type="Rhea" id="RHEA-COMP:9685"/>
        <dbReference type="Rhea" id="RHEA-COMP:9690"/>
        <dbReference type="ChEBI" id="CHEBI:15378"/>
        <dbReference type="ChEBI" id="CHEBI:29999"/>
        <dbReference type="ChEBI" id="CHEBI:57287"/>
        <dbReference type="ChEBI" id="CHEBI:58343"/>
        <dbReference type="ChEBI" id="CHEBI:64479"/>
        <dbReference type="EC" id="2.7.8.7"/>
    </reaction>
</comment>
<comment type="cofactor">
    <cofactor evidence="1">
        <name>Mg(2+)</name>
        <dbReference type="ChEBI" id="CHEBI:18420"/>
    </cofactor>
</comment>
<comment type="subcellular location">
    <subcellularLocation>
        <location evidence="1">Cytoplasm</location>
    </subcellularLocation>
</comment>
<comment type="similarity">
    <text evidence="1">Belongs to the P-Pant transferase superfamily. AcpS family.</text>
</comment>
<keyword id="KW-0963">Cytoplasm</keyword>
<keyword id="KW-0275">Fatty acid biosynthesis</keyword>
<keyword id="KW-0276">Fatty acid metabolism</keyword>
<keyword id="KW-0444">Lipid biosynthesis</keyword>
<keyword id="KW-0443">Lipid metabolism</keyword>
<keyword id="KW-0460">Magnesium</keyword>
<keyword id="KW-0479">Metal-binding</keyword>
<keyword id="KW-1185">Reference proteome</keyword>
<keyword id="KW-0808">Transferase</keyword>
<proteinExistence type="inferred from homology"/>
<evidence type="ECO:0000255" key="1">
    <source>
        <dbReference type="HAMAP-Rule" id="MF_00101"/>
    </source>
</evidence>
<sequence length="145" mass="15934">MTILGIGLDLVTISEFAEQLERTGTTMLRESFTAGERRYCQSKGTDPARSYAARWAAKEAVLKAWASSRFARRPQIGDNPYPLIEVVNDAWGRPSIKLHGLAAEFLPRVRVHLSLTHDGDTAAAMVVLEDPGELADLIEGREATP</sequence>